<reference key="1">
    <citation type="journal article" date="2005" name="Science">
        <title>The transcriptional landscape of the mammalian genome.</title>
        <authorList>
            <person name="Carninci P."/>
            <person name="Kasukawa T."/>
            <person name="Katayama S."/>
            <person name="Gough J."/>
            <person name="Frith M.C."/>
            <person name="Maeda N."/>
            <person name="Oyama R."/>
            <person name="Ravasi T."/>
            <person name="Lenhard B."/>
            <person name="Wells C."/>
            <person name="Kodzius R."/>
            <person name="Shimokawa K."/>
            <person name="Bajic V.B."/>
            <person name="Brenner S.E."/>
            <person name="Batalov S."/>
            <person name="Forrest A.R."/>
            <person name="Zavolan M."/>
            <person name="Davis M.J."/>
            <person name="Wilming L.G."/>
            <person name="Aidinis V."/>
            <person name="Allen J.E."/>
            <person name="Ambesi-Impiombato A."/>
            <person name="Apweiler R."/>
            <person name="Aturaliya R.N."/>
            <person name="Bailey T.L."/>
            <person name="Bansal M."/>
            <person name="Baxter L."/>
            <person name="Beisel K.W."/>
            <person name="Bersano T."/>
            <person name="Bono H."/>
            <person name="Chalk A.M."/>
            <person name="Chiu K.P."/>
            <person name="Choudhary V."/>
            <person name="Christoffels A."/>
            <person name="Clutterbuck D.R."/>
            <person name="Crowe M.L."/>
            <person name="Dalla E."/>
            <person name="Dalrymple B.P."/>
            <person name="de Bono B."/>
            <person name="Della Gatta G."/>
            <person name="di Bernardo D."/>
            <person name="Down T."/>
            <person name="Engstrom P."/>
            <person name="Fagiolini M."/>
            <person name="Faulkner G."/>
            <person name="Fletcher C.F."/>
            <person name="Fukushima T."/>
            <person name="Furuno M."/>
            <person name="Futaki S."/>
            <person name="Gariboldi M."/>
            <person name="Georgii-Hemming P."/>
            <person name="Gingeras T.R."/>
            <person name="Gojobori T."/>
            <person name="Green R.E."/>
            <person name="Gustincich S."/>
            <person name="Harbers M."/>
            <person name="Hayashi Y."/>
            <person name="Hensch T.K."/>
            <person name="Hirokawa N."/>
            <person name="Hill D."/>
            <person name="Huminiecki L."/>
            <person name="Iacono M."/>
            <person name="Ikeo K."/>
            <person name="Iwama A."/>
            <person name="Ishikawa T."/>
            <person name="Jakt M."/>
            <person name="Kanapin A."/>
            <person name="Katoh M."/>
            <person name="Kawasawa Y."/>
            <person name="Kelso J."/>
            <person name="Kitamura H."/>
            <person name="Kitano H."/>
            <person name="Kollias G."/>
            <person name="Krishnan S.P."/>
            <person name="Kruger A."/>
            <person name="Kummerfeld S.K."/>
            <person name="Kurochkin I.V."/>
            <person name="Lareau L.F."/>
            <person name="Lazarevic D."/>
            <person name="Lipovich L."/>
            <person name="Liu J."/>
            <person name="Liuni S."/>
            <person name="McWilliam S."/>
            <person name="Madan Babu M."/>
            <person name="Madera M."/>
            <person name="Marchionni L."/>
            <person name="Matsuda H."/>
            <person name="Matsuzawa S."/>
            <person name="Miki H."/>
            <person name="Mignone F."/>
            <person name="Miyake S."/>
            <person name="Morris K."/>
            <person name="Mottagui-Tabar S."/>
            <person name="Mulder N."/>
            <person name="Nakano N."/>
            <person name="Nakauchi H."/>
            <person name="Ng P."/>
            <person name="Nilsson R."/>
            <person name="Nishiguchi S."/>
            <person name="Nishikawa S."/>
            <person name="Nori F."/>
            <person name="Ohara O."/>
            <person name="Okazaki Y."/>
            <person name="Orlando V."/>
            <person name="Pang K.C."/>
            <person name="Pavan W.J."/>
            <person name="Pavesi G."/>
            <person name="Pesole G."/>
            <person name="Petrovsky N."/>
            <person name="Piazza S."/>
            <person name="Reed J."/>
            <person name="Reid J.F."/>
            <person name="Ring B.Z."/>
            <person name="Ringwald M."/>
            <person name="Rost B."/>
            <person name="Ruan Y."/>
            <person name="Salzberg S.L."/>
            <person name="Sandelin A."/>
            <person name="Schneider C."/>
            <person name="Schoenbach C."/>
            <person name="Sekiguchi K."/>
            <person name="Semple C.A."/>
            <person name="Seno S."/>
            <person name="Sessa L."/>
            <person name="Sheng Y."/>
            <person name="Shibata Y."/>
            <person name="Shimada H."/>
            <person name="Shimada K."/>
            <person name="Silva D."/>
            <person name="Sinclair B."/>
            <person name="Sperling S."/>
            <person name="Stupka E."/>
            <person name="Sugiura K."/>
            <person name="Sultana R."/>
            <person name="Takenaka Y."/>
            <person name="Taki K."/>
            <person name="Tammoja K."/>
            <person name="Tan S.L."/>
            <person name="Tang S."/>
            <person name="Taylor M.S."/>
            <person name="Tegner J."/>
            <person name="Teichmann S.A."/>
            <person name="Ueda H.R."/>
            <person name="van Nimwegen E."/>
            <person name="Verardo R."/>
            <person name="Wei C.L."/>
            <person name="Yagi K."/>
            <person name="Yamanishi H."/>
            <person name="Zabarovsky E."/>
            <person name="Zhu S."/>
            <person name="Zimmer A."/>
            <person name="Hide W."/>
            <person name="Bult C."/>
            <person name="Grimmond S.M."/>
            <person name="Teasdale R.D."/>
            <person name="Liu E.T."/>
            <person name="Brusic V."/>
            <person name="Quackenbush J."/>
            <person name="Wahlestedt C."/>
            <person name="Mattick J.S."/>
            <person name="Hume D.A."/>
            <person name="Kai C."/>
            <person name="Sasaki D."/>
            <person name="Tomaru Y."/>
            <person name="Fukuda S."/>
            <person name="Kanamori-Katayama M."/>
            <person name="Suzuki M."/>
            <person name="Aoki J."/>
            <person name="Arakawa T."/>
            <person name="Iida J."/>
            <person name="Imamura K."/>
            <person name="Itoh M."/>
            <person name="Kato T."/>
            <person name="Kawaji H."/>
            <person name="Kawagashira N."/>
            <person name="Kawashima T."/>
            <person name="Kojima M."/>
            <person name="Kondo S."/>
            <person name="Konno H."/>
            <person name="Nakano K."/>
            <person name="Ninomiya N."/>
            <person name="Nishio T."/>
            <person name="Okada M."/>
            <person name="Plessy C."/>
            <person name="Shibata K."/>
            <person name="Shiraki T."/>
            <person name="Suzuki S."/>
            <person name="Tagami M."/>
            <person name="Waki K."/>
            <person name="Watahiki A."/>
            <person name="Okamura-Oho Y."/>
            <person name="Suzuki H."/>
            <person name="Kawai J."/>
            <person name="Hayashizaki Y."/>
        </authorList>
    </citation>
    <scope>NUCLEOTIDE SEQUENCE [LARGE SCALE MRNA]</scope>
    <source>
        <strain>C57BL/6J</strain>
        <tissue>Cerebellum</tissue>
        <tissue>Intestine</tissue>
        <tissue>Placenta</tissue>
    </source>
</reference>
<reference key="2">
    <citation type="journal article" date="2004" name="Genome Res.">
        <title>The status, quality, and expansion of the NIH full-length cDNA project: the Mammalian Gene Collection (MGC).</title>
        <authorList>
            <consortium name="The MGC Project Team"/>
        </authorList>
    </citation>
    <scope>NUCLEOTIDE SEQUENCE [LARGE SCALE MRNA]</scope>
    <source>
        <strain>129</strain>
        <tissue>Mammary tumor</tissue>
    </source>
</reference>
<reference key="3">
    <citation type="journal article" date="2010" name="Cell">
        <title>A tissue-specific atlas of mouse protein phosphorylation and expression.</title>
        <authorList>
            <person name="Huttlin E.L."/>
            <person name="Jedrychowski M.P."/>
            <person name="Elias J.E."/>
            <person name="Goswami T."/>
            <person name="Rad R."/>
            <person name="Beausoleil S.A."/>
            <person name="Villen J."/>
            <person name="Haas W."/>
            <person name="Sowa M.E."/>
            <person name="Gygi S.P."/>
        </authorList>
    </citation>
    <scope>PHOSPHORYLATION [LARGE SCALE ANALYSIS] AT SER-477</scope>
    <scope>IDENTIFICATION BY MASS SPECTROMETRY [LARGE SCALE ANALYSIS]</scope>
    <source>
        <tissue>Pancreas</tissue>
    </source>
</reference>
<accession>Q3UKU4</accession>
<accession>Q8C578</accession>
<accession>Q8CDC4</accession>
<accession>Q8R3Z0</accession>
<feature type="initiator methionine" description="Removed" evidence="1">
    <location>
        <position position="1"/>
    </location>
</feature>
<feature type="chain" id="PRO_0000314951" description="Protein FAM83F">
    <location>
        <begin position="2"/>
        <end position="495"/>
    </location>
</feature>
<feature type="region of interest" description="DUF1669" evidence="1">
    <location>
        <begin position="2"/>
        <end position="294"/>
    </location>
</feature>
<feature type="region of interest" description="Disordered" evidence="2">
    <location>
        <begin position="341"/>
        <end position="362"/>
    </location>
</feature>
<feature type="region of interest" description="Disordered" evidence="2">
    <location>
        <begin position="384"/>
        <end position="495"/>
    </location>
</feature>
<feature type="compositionally biased region" description="Low complexity" evidence="2">
    <location>
        <begin position="447"/>
        <end position="458"/>
    </location>
</feature>
<feature type="modified residue" description="N-acetylalanine" evidence="1">
    <location>
        <position position="2"/>
    </location>
</feature>
<feature type="modified residue" description="Phosphoserine" evidence="1">
    <location>
        <position position="4"/>
    </location>
</feature>
<feature type="modified residue" description="Phosphoserine" evidence="4">
    <location>
        <position position="477"/>
    </location>
</feature>
<feature type="sequence conflict" description="In Ref. 1; BAC26912/BAC37615 and 2; AAH16600." evidence="3" ref="1 2">
    <original>F</original>
    <variation>V</variation>
    <location>
        <position position="91"/>
    </location>
</feature>
<feature type="sequence conflict" description="In Ref. 1; BAC26912." evidence="3" ref="1">
    <original>R</original>
    <variation>G</variation>
    <location>
        <position position="303"/>
    </location>
</feature>
<evidence type="ECO:0000250" key="1">
    <source>
        <dbReference type="UniProtKB" id="Q8NEG4"/>
    </source>
</evidence>
<evidence type="ECO:0000256" key="2">
    <source>
        <dbReference type="SAM" id="MobiDB-lite"/>
    </source>
</evidence>
<evidence type="ECO:0000305" key="3"/>
<evidence type="ECO:0007744" key="4">
    <source>
    </source>
</evidence>
<proteinExistence type="evidence at protein level"/>
<sequence length="495" mass="55012">MAESQLSCLDEAHVNERVTEAHAAFYYCERRRAALEALLGGGEQAYRELVKKERLRDFLSSQERQALCAAWSPYEEAVSSTRAKAKAKAKFPAQPTESLAYWPDRSDTEVPPLDLGWTDTNFYRGVSRVTLFTHPPKEEKAPHLKQVVRQMIQQAQKVIAVVMDLFTDGDIFQDIVDAACKRRVPVYIILDEGGVKYFLEMCQGLELADFRIRNIRVRSVTGIGFYMPMGKIKGTLSSKFLMVDGDKVATGSFSFTWSSSYVDRNLLLLLTGQNMEPFDIEFRELYAISEEVNLHQHLGLAGRIGLNYSSTVARKLINPKYALVAGTRRPPGEMMRWAARQQREAGGNVEGQEEGSGGGESARRLESFLNDLVTVEQILPTVEPISPRLQRPTNGRPVSHAHTDAKHRSREALPQNGKGEAANGEATPAKEGKRFSSRLFSRRVKRPAVPSSMASSPSTETFADVEFPLGKRHNEGSNANISGKGITKASNCVIS</sequence>
<dbReference type="EMBL" id="AK030342">
    <property type="protein sequence ID" value="BAC26912.1"/>
    <property type="molecule type" value="mRNA"/>
</dbReference>
<dbReference type="EMBL" id="AK079344">
    <property type="protein sequence ID" value="BAC37615.1"/>
    <property type="status" value="ALT_SEQ"/>
    <property type="molecule type" value="mRNA"/>
</dbReference>
<dbReference type="EMBL" id="AK145865">
    <property type="protein sequence ID" value="BAE26707.1"/>
    <property type="molecule type" value="mRNA"/>
</dbReference>
<dbReference type="EMBL" id="BC016600">
    <property type="protein sequence ID" value="AAH16600.2"/>
    <property type="molecule type" value="mRNA"/>
</dbReference>
<dbReference type="CCDS" id="CCDS49672.1"/>
<dbReference type="RefSeq" id="NP_666098.2">
    <property type="nucleotide sequence ID" value="NM_145986.2"/>
</dbReference>
<dbReference type="SMR" id="Q3UKU4"/>
<dbReference type="FunCoup" id="Q3UKU4">
    <property type="interactions" value="4"/>
</dbReference>
<dbReference type="STRING" id="10090.ENSMUSP00000023044"/>
<dbReference type="GlyGen" id="Q3UKU4">
    <property type="glycosylation" value="1 site"/>
</dbReference>
<dbReference type="iPTMnet" id="Q3UKU4"/>
<dbReference type="PhosphoSitePlus" id="Q3UKU4"/>
<dbReference type="PaxDb" id="10090-ENSMUSP00000023044"/>
<dbReference type="ProteomicsDB" id="266832"/>
<dbReference type="DNASU" id="213956"/>
<dbReference type="GeneID" id="213956"/>
<dbReference type="KEGG" id="mmu:213956"/>
<dbReference type="UCSC" id="uc007wvr.1">
    <property type="organism name" value="mouse"/>
</dbReference>
<dbReference type="AGR" id="MGI:2146227"/>
<dbReference type="CTD" id="113828"/>
<dbReference type="MGI" id="MGI:2146227">
    <property type="gene designation" value="Fam83f"/>
</dbReference>
<dbReference type="eggNOG" id="ENOG502QPW1">
    <property type="taxonomic scope" value="Eukaryota"/>
</dbReference>
<dbReference type="InParanoid" id="Q3UKU4"/>
<dbReference type="OrthoDB" id="6103632at2759"/>
<dbReference type="PhylomeDB" id="Q3UKU4"/>
<dbReference type="TreeFam" id="TF330777"/>
<dbReference type="BioGRID-ORCS" id="213956">
    <property type="hits" value="2 hits in 79 CRISPR screens"/>
</dbReference>
<dbReference type="PRO" id="PR:Q3UKU4"/>
<dbReference type="Proteomes" id="UP000000589">
    <property type="component" value="Unplaced"/>
</dbReference>
<dbReference type="RNAct" id="Q3UKU4">
    <property type="molecule type" value="protein"/>
</dbReference>
<dbReference type="CDD" id="cd09186">
    <property type="entry name" value="PLDc_FAM83F_N"/>
    <property type="match status" value="1"/>
</dbReference>
<dbReference type="Gene3D" id="3.30.870.10">
    <property type="entry name" value="Endonuclease Chain A"/>
    <property type="match status" value="1"/>
</dbReference>
<dbReference type="InterPro" id="IPR050944">
    <property type="entry name" value="FAM83"/>
</dbReference>
<dbReference type="InterPro" id="IPR012461">
    <property type="entry name" value="SACK1"/>
</dbReference>
<dbReference type="PANTHER" id="PTHR16181">
    <property type="entry name" value="PROTEIN FAM83A-RELATED"/>
    <property type="match status" value="1"/>
</dbReference>
<dbReference type="PANTHER" id="PTHR16181:SF29">
    <property type="entry name" value="PROTEIN FAM83A-RELATED"/>
    <property type="match status" value="1"/>
</dbReference>
<dbReference type="Pfam" id="PF07894">
    <property type="entry name" value="SACK1"/>
    <property type="match status" value="1"/>
</dbReference>
<dbReference type="SUPFAM" id="SSF56024">
    <property type="entry name" value="Phospholipase D/nuclease"/>
    <property type="match status" value="1"/>
</dbReference>
<comment type="subunit">
    <text evidence="1">Directly interacts (via DUF1669) with CSNK1A1 and CSNK1A1L.</text>
</comment>
<comment type="subcellular location">
    <subcellularLocation>
        <location evidence="1">Cell membrane</location>
    </subcellularLocation>
</comment>
<comment type="domain">
    <text evidence="1">All members of the FAM83 family of proteins share a conserved N-terminal DUF1669 (domain of unknown function 1669) domain of about 300 amino acids. This domain mediates the interaction with casein kinase 1 (CK1) isoforms. Therefore, it has been proposed to rename DUF1669 the polypeptide anchor of CK1 domain.</text>
</comment>
<comment type="similarity">
    <text evidence="3">Belongs to the FAM83 family.</text>
</comment>
<comment type="sequence caution" evidence="3">
    <conflict type="miscellaneous discrepancy">
        <sequence resource="EMBL-CDS" id="BAC37615"/>
    </conflict>
    <text>Probable cloning artifact.</text>
</comment>
<gene>
    <name type="primary">Fam83f</name>
</gene>
<organism>
    <name type="scientific">Mus musculus</name>
    <name type="common">Mouse</name>
    <dbReference type="NCBI Taxonomy" id="10090"/>
    <lineage>
        <taxon>Eukaryota</taxon>
        <taxon>Metazoa</taxon>
        <taxon>Chordata</taxon>
        <taxon>Craniata</taxon>
        <taxon>Vertebrata</taxon>
        <taxon>Euteleostomi</taxon>
        <taxon>Mammalia</taxon>
        <taxon>Eutheria</taxon>
        <taxon>Euarchontoglires</taxon>
        <taxon>Glires</taxon>
        <taxon>Rodentia</taxon>
        <taxon>Myomorpha</taxon>
        <taxon>Muroidea</taxon>
        <taxon>Muridae</taxon>
        <taxon>Murinae</taxon>
        <taxon>Mus</taxon>
        <taxon>Mus</taxon>
    </lineage>
</organism>
<keyword id="KW-0007">Acetylation</keyword>
<keyword id="KW-1003">Cell membrane</keyword>
<keyword id="KW-0472">Membrane</keyword>
<keyword id="KW-0597">Phosphoprotein</keyword>
<keyword id="KW-1185">Reference proteome</keyword>
<protein>
    <recommendedName>
        <fullName>Protein FAM83F</fullName>
    </recommendedName>
</protein>
<name>FA83F_MOUSE</name>